<gene>
    <name type="primary">AVL9</name>
    <name type="synonym">KIAA0241</name>
</gene>
<evidence type="ECO:0000250" key="1">
    <source>
        <dbReference type="UniProtKB" id="Q80U56"/>
    </source>
</evidence>
<evidence type="ECO:0000255" key="2"/>
<evidence type="ECO:0000255" key="3">
    <source>
        <dbReference type="PROSITE-ProRule" id="PRU00304"/>
    </source>
</evidence>
<evidence type="ECO:0000256" key="4">
    <source>
        <dbReference type="SAM" id="MobiDB-lite"/>
    </source>
</evidence>
<evidence type="ECO:0000269" key="5">
    <source>
    </source>
</evidence>
<evidence type="ECO:0000303" key="6">
    <source>
    </source>
</evidence>
<evidence type="ECO:0000305" key="7"/>
<evidence type="ECO:0007744" key="8">
    <source>
    </source>
</evidence>
<reference key="1">
    <citation type="journal article" date="2004" name="Nat. Genet.">
        <title>Complete sequencing and characterization of 21,243 full-length human cDNAs.</title>
        <authorList>
            <person name="Ota T."/>
            <person name="Suzuki Y."/>
            <person name="Nishikawa T."/>
            <person name="Otsuki T."/>
            <person name="Sugiyama T."/>
            <person name="Irie R."/>
            <person name="Wakamatsu A."/>
            <person name="Hayashi K."/>
            <person name="Sato H."/>
            <person name="Nagai K."/>
            <person name="Kimura K."/>
            <person name="Makita H."/>
            <person name="Sekine M."/>
            <person name="Obayashi M."/>
            <person name="Nishi T."/>
            <person name="Shibahara T."/>
            <person name="Tanaka T."/>
            <person name="Ishii S."/>
            <person name="Yamamoto J."/>
            <person name="Saito K."/>
            <person name="Kawai Y."/>
            <person name="Isono Y."/>
            <person name="Nakamura Y."/>
            <person name="Nagahari K."/>
            <person name="Murakami K."/>
            <person name="Yasuda T."/>
            <person name="Iwayanagi T."/>
            <person name="Wagatsuma M."/>
            <person name="Shiratori A."/>
            <person name="Sudo H."/>
            <person name="Hosoiri T."/>
            <person name="Kaku Y."/>
            <person name="Kodaira H."/>
            <person name="Kondo H."/>
            <person name="Sugawara M."/>
            <person name="Takahashi M."/>
            <person name="Kanda K."/>
            <person name="Yokoi T."/>
            <person name="Furuya T."/>
            <person name="Kikkawa E."/>
            <person name="Omura Y."/>
            <person name="Abe K."/>
            <person name="Kamihara K."/>
            <person name="Katsuta N."/>
            <person name="Sato K."/>
            <person name="Tanikawa M."/>
            <person name="Yamazaki M."/>
            <person name="Ninomiya K."/>
            <person name="Ishibashi T."/>
            <person name="Yamashita H."/>
            <person name="Murakawa K."/>
            <person name="Fujimori K."/>
            <person name="Tanai H."/>
            <person name="Kimata M."/>
            <person name="Watanabe M."/>
            <person name="Hiraoka S."/>
            <person name="Chiba Y."/>
            <person name="Ishida S."/>
            <person name="Ono Y."/>
            <person name="Takiguchi S."/>
            <person name="Watanabe S."/>
            <person name="Yosida M."/>
            <person name="Hotuta T."/>
            <person name="Kusano J."/>
            <person name="Kanehori K."/>
            <person name="Takahashi-Fujii A."/>
            <person name="Hara H."/>
            <person name="Tanase T.-O."/>
            <person name="Nomura Y."/>
            <person name="Togiya S."/>
            <person name="Komai F."/>
            <person name="Hara R."/>
            <person name="Takeuchi K."/>
            <person name="Arita M."/>
            <person name="Imose N."/>
            <person name="Musashino K."/>
            <person name="Yuuki H."/>
            <person name="Oshima A."/>
            <person name="Sasaki N."/>
            <person name="Aotsuka S."/>
            <person name="Yoshikawa Y."/>
            <person name="Matsunawa H."/>
            <person name="Ichihara T."/>
            <person name="Shiohata N."/>
            <person name="Sano S."/>
            <person name="Moriya S."/>
            <person name="Momiyama H."/>
            <person name="Satoh N."/>
            <person name="Takami S."/>
            <person name="Terashima Y."/>
            <person name="Suzuki O."/>
            <person name="Nakagawa S."/>
            <person name="Senoh A."/>
            <person name="Mizoguchi H."/>
            <person name="Goto Y."/>
            <person name="Shimizu F."/>
            <person name="Wakebe H."/>
            <person name="Hishigaki H."/>
            <person name="Watanabe T."/>
            <person name="Sugiyama A."/>
            <person name="Takemoto M."/>
            <person name="Kawakami B."/>
            <person name="Yamazaki M."/>
            <person name="Watanabe K."/>
            <person name="Kumagai A."/>
            <person name="Itakura S."/>
            <person name="Fukuzumi Y."/>
            <person name="Fujimori Y."/>
            <person name="Komiyama M."/>
            <person name="Tashiro H."/>
            <person name="Tanigami A."/>
            <person name="Fujiwara T."/>
            <person name="Ono T."/>
            <person name="Yamada K."/>
            <person name="Fujii Y."/>
            <person name="Ozaki K."/>
            <person name="Hirao M."/>
            <person name="Ohmori Y."/>
            <person name="Kawabata A."/>
            <person name="Hikiji T."/>
            <person name="Kobatake N."/>
            <person name="Inagaki H."/>
            <person name="Ikema Y."/>
            <person name="Okamoto S."/>
            <person name="Okitani R."/>
            <person name="Kawakami T."/>
            <person name="Noguchi S."/>
            <person name="Itoh T."/>
            <person name="Shigeta K."/>
            <person name="Senba T."/>
            <person name="Matsumura K."/>
            <person name="Nakajima Y."/>
            <person name="Mizuno T."/>
            <person name="Morinaga M."/>
            <person name="Sasaki M."/>
            <person name="Togashi T."/>
            <person name="Oyama M."/>
            <person name="Hata H."/>
            <person name="Watanabe M."/>
            <person name="Komatsu T."/>
            <person name="Mizushima-Sugano J."/>
            <person name="Satoh T."/>
            <person name="Shirai Y."/>
            <person name="Takahashi Y."/>
            <person name="Nakagawa K."/>
            <person name="Okumura K."/>
            <person name="Nagase T."/>
            <person name="Nomura N."/>
            <person name="Kikuchi H."/>
            <person name="Masuho Y."/>
            <person name="Yamashita R."/>
            <person name="Nakai K."/>
            <person name="Yada T."/>
            <person name="Nakamura Y."/>
            <person name="Ohara O."/>
            <person name="Isogai T."/>
            <person name="Sugano S."/>
        </authorList>
    </citation>
    <scope>NUCLEOTIDE SEQUENCE [LARGE SCALE MRNA] (ISOFORM 1)</scope>
</reference>
<reference key="2">
    <citation type="journal article" date="2003" name="Nature">
        <title>The DNA sequence of human chromosome 7.</title>
        <authorList>
            <person name="Hillier L.W."/>
            <person name="Fulton R.S."/>
            <person name="Fulton L.A."/>
            <person name="Graves T.A."/>
            <person name="Pepin K.H."/>
            <person name="Wagner-McPherson C."/>
            <person name="Layman D."/>
            <person name="Maas J."/>
            <person name="Jaeger S."/>
            <person name="Walker R."/>
            <person name="Wylie K."/>
            <person name="Sekhon M."/>
            <person name="Becker M.C."/>
            <person name="O'Laughlin M.D."/>
            <person name="Schaller M.E."/>
            <person name="Fewell G.A."/>
            <person name="Delehaunty K.D."/>
            <person name="Miner T.L."/>
            <person name="Nash W.E."/>
            <person name="Cordes M."/>
            <person name="Du H."/>
            <person name="Sun H."/>
            <person name="Edwards J."/>
            <person name="Bradshaw-Cordum H."/>
            <person name="Ali J."/>
            <person name="Andrews S."/>
            <person name="Isak A."/>
            <person name="Vanbrunt A."/>
            <person name="Nguyen C."/>
            <person name="Du F."/>
            <person name="Lamar B."/>
            <person name="Courtney L."/>
            <person name="Kalicki J."/>
            <person name="Ozersky P."/>
            <person name="Bielicki L."/>
            <person name="Scott K."/>
            <person name="Holmes A."/>
            <person name="Harkins R."/>
            <person name="Harris A."/>
            <person name="Strong C.M."/>
            <person name="Hou S."/>
            <person name="Tomlinson C."/>
            <person name="Dauphin-Kohlberg S."/>
            <person name="Kozlowicz-Reilly A."/>
            <person name="Leonard S."/>
            <person name="Rohlfing T."/>
            <person name="Rock S.M."/>
            <person name="Tin-Wollam A.-M."/>
            <person name="Abbott A."/>
            <person name="Minx P."/>
            <person name="Maupin R."/>
            <person name="Strowmatt C."/>
            <person name="Latreille P."/>
            <person name="Miller N."/>
            <person name="Johnson D."/>
            <person name="Murray J."/>
            <person name="Woessner J.P."/>
            <person name="Wendl M.C."/>
            <person name="Yang S.-P."/>
            <person name="Schultz B.R."/>
            <person name="Wallis J.W."/>
            <person name="Spieth J."/>
            <person name="Bieri T.A."/>
            <person name="Nelson J.O."/>
            <person name="Berkowicz N."/>
            <person name="Wohldmann P.E."/>
            <person name="Cook L.L."/>
            <person name="Hickenbotham M.T."/>
            <person name="Eldred J."/>
            <person name="Williams D."/>
            <person name="Bedell J.A."/>
            <person name="Mardis E.R."/>
            <person name="Clifton S.W."/>
            <person name="Chissoe S.L."/>
            <person name="Marra M.A."/>
            <person name="Raymond C."/>
            <person name="Haugen E."/>
            <person name="Gillett W."/>
            <person name="Zhou Y."/>
            <person name="James R."/>
            <person name="Phelps K."/>
            <person name="Iadanoto S."/>
            <person name="Bubb K."/>
            <person name="Simms E."/>
            <person name="Levy R."/>
            <person name="Clendenning J."/>
            <person name="Kaul R."/>
            <person name="Kent W.J."/>
            <person name="Furey T.S."/>
            <person name="Baertsch R.A."/>
            <person name="Brent M.R."/>
            <person name="Keibler E."/>
            <person name="Flicek P."/>
            <person name="Bork P."/>
            <person name="Suyama M."/>
            <person name="Bailey J.A."/>
            <person name="Portnoy M.E."/>
            <person name="Torrents D."/>
            <person name="Chinwalla A.T."/>
            <person name="Gish W.R."/>
            <person name="Eddy S.R."/>
            <person name="McPherson J.D."/>
            <person name="Olson M.V."/>
            <person name="Eichler E.E."/>
            <person name="Green E.D."/>
            <person name="Waterston R.H."/>
            <person name="Wilson R.K."/>
        </authorList>
    </citation>
    <scope>NUCLEOTIDE SEQUENCE [LARGE SCALE GENOMIC DNA]</scope>
</reference>
<reference key="3">
    <citation type="journal article" date="1996" name="DNA Res.">
        <title>Prediction of the coding sequences of unidentified human genes. VI. The coding sequences of 80 new genes (KIAA0201-KIAA0280) deduced by analysis of cDNA clones from cell line KG-1 and brain.</title>
        <authorList>
            <person name="Nagase T."/>
            <person name="Seki N."/>
            <person name="Ishikawa K."/>
            <person name="Ohira M."/>
            <person name="Kawarabayasi Y."/>
            <person name="Ohara O."/>
            <person name="Tanaka A."/>
            <person name="Kotani H."/>
            <person name="Miyajima N."/>
            <person name="Nomura N."/>
        </authorList>
    </citation>
    <scope>NUCLEOTIDE SEQUENCE [LARGE SCALE MRNA] OF 70-648 (ISOFORM 2)</scope>
    <source>
        <tissue>Bone marrow</tissue>
    </source>
</reference>
<reference key="4">
    <citation type="journal article" date="2008" name="Proc. Natl. Acad. Sci. U.S.A.">
        <title>A quantitative atlas of mitotic phosphorylation.</title>
        <authorList>
            <person name="Dephoure N."/>
            <person name="Zhou C."/>
            <person name="Villen J."/>
            <person name="Beausoleil S.A."/>
            <person name="Bakalarski C.E."/>
            <person name="Elledge S.J."/>
            <person name="Gygi S.P."/>
        </authorList>
    </citation>
    <scope>IDENTIFICATION BY MASS SPECTROMETRY [LARGE SCALE ANALYSIS]</scope>
    <source>
        <tissue>Cervix carcinoma</tissue>
    </source>
</reference>
<reference key="5">
    <citation type="journal article" date="2011" name="BMC Syst. Biol.">
        <title>Initial characterization of the human central proteome.</title>
        <authorList>
            <person name="Burkard T.R."/>
            <person name="Planyavsky M."/>
            <person name="Kaupe I."/>
            <person name="Breitwieser F.P."/>
            <person name="Buerckstuemmer T."/>
            <person name="Bennett K.L."/>
            <person name="Superti-Furga G."/>
            <person name="Colinge J."/>
        </authorList>
    </citation>
    <scope>IDENTIFICATION BY MASS SPECTROMETRY [LARGE SCALE ANALYSIS]</scope>
</reference>
<reference key="6">
    <citation type="journal article" date="2012" name="Dev. Cell">
        <title>Rab14 and its exchange factor FAM116 link endocytic recycling and adherens junction stability in migrating cells.</title>
        <authorList>
            <person name="Linford A."/>
            <person name="Yoshimura S."/>
            <person name="Nunes Bastos R."/>
            <person name="Langemeyer L."/>
            <person name="Gerondopoulos A."/>
            <person name="Rigden D.J."/>
            <person name="Barr F.A."/>
        </authorList>
    </citation>
    <scope>FUNCTION</scope>
    <scope>SUBCELLULAR LOCATION</scope>
</reference>
<reference key="7">
    <citation type="journal article" date="2014" name="Mol. Cell. Proteomics">
        <title>Immunoaffinity enrichment and mass spectrometry analysis of protein methylation.</title>
        <authorList>
            <person name="Guo A."/>
            <person name="Gu H."/>
            <person name="Zhou J."/>
            <person name="Mulhern D."/>
            <person name="Wang Y."/>
            <person name="Lee K.A."/>
            <person name="Yang V."/>
            <person name="Aguiar M."/>
            <person name="Kornhauser J."/>
            <person name="Jia X."/>
            <person name="Ren J."/>
            <person name="Beausoleil S.A."/>
            <person name="Silva J.C."/>
            <person name="Vemulapalli V."/>
            <person name="Bedford M.T."/>
            <person name="Comb M.J."/>
        </authorList>
    </citation>
    <scope>METHYLATION [LARGE SCALE ANALYSIS] AT ARG-588</scope>
    <scope>IDENTIFICATION BY MASS SPECTROMETRY [LARGE SCALE ANALYSIS]</scope>
    <source>
        <tissue>Colon carcinoma</tissue>
    </source>
</reference>
<comment type="function">
    <text evidence="5">Functions in cell migration.</text>
</comment>
<comment type="subcellular location">
    <subcellularLocation>
        <location evidence="5">Recycling endosome</location>
    </subcellularLocation>
    <subcellularLocation>
        <location evidence="7">Membrane</location>
        <topology evidence="7">Single-pass membrane protein</topology>
    </subcellularLocation>
</comment>
<comment type="alternative products">
    <event type="alternative splicing"/>
    <isoform>
        <id>Q8NBF6-1</id>
        <name>1</name>
        <sequence type="displayed"/>
    </isoform>
    <isoform>
        <id>Q8NBF6-2</id>
        <name>2</name>
        <sequence type="described" ref="VSP_019943"/>
    </isoform>
</comment>
<comment type="similarity">
    <text evidence="7">Belongs to the AVL9 family.</text>
</comment>
<feature type="chain" id="PRO_0000247178" description="Late secretory pathway protein AVL9 homolog">
    <location>
        <begin position="1"/>
        <end position="648"/>
    </location>
</feature>
<feature type="transmembrane region" description="Helical" evidence="2">
    <location>
        <begin position="214"/>
        <end position="230"/>
    </location>
</feature>
<feature type="domain" description="uDENN" evidence="3">
    <location>
        <begin position="17"/>
        <end position="161"/>
    </location>
</feature>
<feature type="domain" description="cDENN" evidence="3">
    <location>
        <begin position="173"/>
        <end position="340"/>
    </location>
</feature>
<feature type="domain" description="dDENN" evidence="3">
    <location>
        <begin position="342"/>
        <end position="593"/>
    </location>
</feature>
<feature type="region of interest" description="Disordered" evidence="4">
    <location>
        <begin position="299"/>
        <end position="336"/>
    </location>
</feature>
<feature type="region of interest" description="Disordered" evidence="4">
    <location>
        <begin position="349"/>
        <end position="372"/>
    </location>
</feature>
<feature type="compositionally biased region" description="Polar residues" evidence="4">
    <location>
        <begin position="306"/>
        <end position="315"/>
    </location>
</feature>
<feature type="modified residue" description="Phosphoserine" evidence="1">
    <location>
        <position position="244"/>
    </location>
</feature>
<feature type="modified residue" description="Omega-N-methylarginine" evidence="8">
    <location>
        <position position="588"/>
    </location>
</feature>
<feature type="splice variant" id="VSP_019943" description="In isoform 2." evidence="6">
    <original>DNEKILSDYGTTFVTAWKNTHNYRVWNSNKHPALAEINPNHPFQGQYSVSDMKLRFSHSVQNSERG</original>
    <variation>VLFRIVNVA</variation>
    <location>
        <begin position="524"/>
        <end position="589"/>
    </location>
</feature>
<feature type="sequence variant" id="VAR_027083" description="In dbSNP:rs2290213.">
    <original>C</original>
    <variation>S</variation>
    <location>
        <position position="257"/>
    </location>
</feature>
<keyword id="KW-0025">Alternative splicing</keyword>
<keyword id="KW-0967">Endosome</keyword>
<keyword id="KW-0472">Membrane</keyword>
<keyword id="KW-0488">Methylation</keyword>
<keyword id="KW-0597">Phosphoprotein</keyword>
<keyword id="KW-1267">Proteomics identification</keyword>
<keyword id="KW-1185">Reference proteome</keyword>
<keyword id="KW-0812">Transmembrane</keyword>
<keyword id="KW-1133">Transmembrane helix</keyword>
<dbReference type="EMBL" id="AK090619">
    <property type="protein sequence ID" value="BAC03489.1"/>
    <property type="molecule type" value="mRNA"/>
</dbReference>
<dbReference type="EMBL" id="AACC02000087">
    <property type="protein sequence ID" value="EAL24439.1"/>
    <property type="molecule type" value="Genomic_DNA"/>
</dbReference>
<dbReference type="EMBL" id="D87682">
    <property type="protein sequence ID" value="BAA13435.1"/>
    <property type="molecule type" value="mRNA"/>
</dbReference>
<dbReference type="CCDS" id="CCDS34613.1">
    <molecule id="Q8NBF6-1"/>
</dbReference>
<dbReference type="RefSeq" id="NP_055875.1">
    <molecule id="Q8NBF6-1"/>
    <property type="nucleotide sequence ID" value="NM_015060.3"/>
</dbReference>
<dbReference type="BioGRID" id="116711">
    <property type="interactions" value="26"/>
</dbReference>
<dbReference type="FunCoup" id="Q8NBF6">
    <property type="interactions" value="2067"/>
</dbReference>
<dbReference type="IntAct" id="Q8NBF6">
    <property type="interactions" value="17"/>
</dbReference>
<dbReference type="STRING" id="9606.ENSP00000315568"/>
<dbReference type="GlyCosmos" id="Q8NBF6">
    <property type="glycosylation" value="1 site, 1 glycan"/>
</dbReference>
<dbReference type="GlyGen" id="Q8NBF6">
    <property type="glycosylation" value="3 sites, 1 O-linked glycan (3 sites)"/>
</dbReference>
<dbReference type="iPTMnet" id="Q8NBF6"/>
<dbReference type="MetOSite" id="Q8NBF6"/>
<dbReference type="PhosphoSitePlus" id="Q8NBF6"/>
<dbReference type="BioMuta" id="AVL9"/>
<dbReference type="DMDM" id="74730135"/>
<dbReference type="jPOST" id="Q8NBF6"/>
<dbReference type="MassIVE" id="Q8NBF6"/>
<dbReference type="PaxDb" id="9606-ENSP00000315568"/>
<dbReference type="PeptideAtlas" id="Q8NBF6"/>
<dbReference type="ProteomicsDB" id="72764">
    <molecule id="Q8NBF6-1"/>
</dbReference>
<dbReference type="ProteomicsDB" id="72765">
    <molecule id="Q8NBF6-2"/>
</dbReference>
<dbReference type="Pumba" id="Q8NBF6"/>
<dbReference type="Antibodypedia" id="53032">
    <property type="antibodies" value="78 antibodies from 14 providers"/>
</dbReference>
<dbReference type="DNASU" id="23080"/>
<dbReference type="Ensembl" id="ENST00000318709.9">
    <molecule id="Q8NBF6-1"/>
    <property type="protein sequence ID" value="ENSP00000315568.4"/>
    <property type="gene ID" value="ENSG00000105778.20"/>
</dbReference>
<dbReference type="GeneID" id="23080"/>
<dbReference type="KEGG" id="hsa:23080"/>
<dbReference type="MANE-Select" id="ENST00000318709.9">
    <property type="protein sequence ID" value="ENSP00000315568.4"/>
    <property type="RefSeq nucleotide sequence ID" value="NM_015060.3"/>
    <property type="RefSeq protein sequence ID" value="NP_055875.1"/>
</dbReference>
<dbReference type="UCSC" id="uc003tcv.2">
    <molecule id="Q8NBF6-1"/>
    <property type="organism name" value="human"/>
</dbReference>
<dbReference type="AGR" id="HGNC:28994"/>
<dbReference type="CTD" id="23080"/>
<dbReference type="DisGeNET" id="23080"/>
<dbReference type="GeneCards" id="AVL9"/>
<dbReference type="HGNC" id="HGNC:28994">
    <property type="gene designation" value="AVL9"/>
</dbReference>
<dbReference type="HPA" id="ENSG00000105778">
    <property type="expression patterns" value="Low tissue specificity"/>
</dbReference>
<dbReference type="MIM" id="612927">
    <property type="type" value="gene"/>
</dbReference>
<dbReference type="neXtProt" id="NX_Q8NBF6"/>
<dbReference type="OpenTargets" id="ENSG00000105778"/>
<dbReference type="PharmGKB" id="PA164716408"/>
<dbReference type="VEuPathDB" id="HostDB:ENSG00000105778"/>
<dbReference type="eggNOG" id="KOG3823">
    <property type="taxonomic scope" value="Eukaryota"/>
</dbReference>
<dbReference type="GeneTree" id="ENSGT00390000010255"/>
<dbReference type="HOGENOM" id="CLU_009066_2_1_1"/>
<dbReference type="InParanoid" id="Q8NBF6"/>
<dbReference type="OMA" id="IRTQFRV"/>
<dbReference type="OrthoDB" id="26278at2759"/>
<dbReference type="PAN-GO" id="Q8NBF6">
    <property type="GO annotations" value="1 GO annotation based on evolutionary models"/>
</dbReference>
<dbReference type="PhylomeDB" id="Q8NBF6"/>
<dbReference type="TreeFam" id="TF105998"/>
<dbReference type="PathwayCommons" id="Q8NBF6"/>
<dbReference type="SignaLink" id="Q8NBF6"/>
<dbReference type="BioGRID-ORCS" id="23080">
    <property type="hits" value="11 hits in 1148 CRISPR screens"/>
</dbReference>
<dbReference type="ChiTaRS" id="AVL9">
    <property type="organism name" value="human"/>
</dbReference>
<dbReference type="GenomeRNAi" id="23080"/>
<dbReference type="Pharos" id="Q8NBF6">
    <property type="development level" value="Tbio"/>
</dbReference>
<dbReference type="PRO" id="PR:Q8NBF6"/>
<dbReference type="Proteomes" id="UP000005640">
    <property type="component" value="Chromosome 7"/>
</dbReference>
<dbReference type="RNAct" id="Q8NBF6">
    <property type="molecule type" value="protein"/>
</dbReference>
<dbReference type="Bgee" id="ENSG00000105778">
    <property type="expression patterns" value="Expressed in choroid plexus epithelium and 200 other cell types or tissues"/>
</dbReference>
<dbReference type="ExpressionAtlas" id="Q8NBF6">
    <property type="expression patterns" value="baseline and differential"/>
</dbReference>
<dbReference type="GO" id="GO:0005737">
    <property type="term" value="C:cytoplasm"/>
    <property type="evidence" value="ECO:0000318"/>
    <property type="project" value="GO_Central"/>
</dbReference>
<dbReference type="GO" id="GO:0016020">
    <property type="term" value="C:membrane"/>
    <property type="evidence" value="ECO:0007669"/>
    <property type="project" value="UniProtKB-SubCell"/>
</dbReference>
<dbReference type="GO" id="GO:0055037">
    <property type="term" value="C:recycling endosome"/>
    <property type="evidence" value="ECO:0000314"/>
    <property type="project" value="UniProtKB"/>
</dbReference>
<dbReference type="GO" id="GO:0016477">
    <property type="term" value="P:cell migration"/>
    <property type="evidence" value="ECO:0000314"/>
    <property type="project" value="UniProtKB"/>
</dbReference>
<dbReference type="InterPro" id="IPR018307">
    <property type="entry name" value="ABL9/DENND6_dom"/>
</dbReference>
<dbReference type="InterPro" id="IPR051731">
    <property type="entry name" value="DENND11/AVL9_GEFs"/>
</dbReference>
<dbReference type="InterPro" id="IPR037516">
    <property type="entry name" value="Tripartite_DENN"/>
</dbReference>
<dbReference type="PANTHER" id="PTHR31017:SF1">
    <property type="entry name" value="LATE SECRETORY PATHWAY PROTEIN AVL9 HOMOLOG"/>
    <property type="match status" value="1"/>
</dbReference>
<dbReference type="PANTHER" id="PTHR31017">
    <property type="entry name" value="LATE SECRETORY PATHWAY PROTEIN AVL9-RELATED"/>
    <property type="match status" value="1"/>
</dbReference>
<dbReference type="Pfam" id="PF09794">
    <property type="entry name" value="Avl9"/>
    <property type="match status" value="1"/>
</dbReference>
<dbReference type="PROSITE" id="PS50211">
    <property type="entry name" value="DENN"/>
    <property type="match status" value="1"/>
</dbReference>
<proteinExistence type="evidence at protein level"/>
<accession>Q8NBF6</accession>
<accession>Q92573</accession>
<protein>
    <recommendedName>
        <fullName>Late secretory pathway protein AVL9 homolog</fullName>
    </recommendedName>
</protein>
<sequence>MEKARRGGDGVPRGPVLHIVVVGFHHKKGCQVEFSYPPLIPGDGHDSHTLPEEWKYLPFLALPDGAHNYQEDTVFFHLPPRNGNGATVFGISCYRQIEAKALKVRQADITRETVQKSVCVLSKLPLYGLLQAKLQLITHAYFEEKDFSQISILKELYEHMNSSLGGASLEGSQVYLGLSPRDLVLHFRHKVLILFKLILLEKKVLFYISPVNKLVGALMTVLSLFPGMIEHGLSDCSQYRPRKSMSEDGGLQESNPCADDFVSASTADVSHTNLGTIRKVMAGNHGEDAAMKTEEPLFQVEDSSKGQEPNDTNQYLKPPSRPSPDSSESDWETLDPSVLEDPNLKEREQLGSDQTNLFPKDSVPSESLPITVQPQANTGQVVLIPGLISGLEEDQYGMPLAIFTKGYLCLPYMALQQHHLLSDVTVRGFVAGATNILFRQQKHLSDAIVEVEEALIQIHDPELRKLLNPTTADLRFADYLVRHVTENRDDVFLDGTGWEGGDEWIRAQFAVYIHALLAATLQLDNEKILSDYGTTFVTAWKNTHNYRVWNSNKHPALAEINPNHPFQGQYSVSDMKLRFSHSVQNSERGKKIGNVMVTTSRNVVQTGKAVGQSVGGAFSSAKTAMSSWLSTFTTSTSQSLTEPPDEKP</sequence>
<organism>
    <name type="scientific">Homo sapiens</name>
    <name type="common">Human</name>
    <dbReference type="NCBI Taxonomy" id="9606"/>
    <lineage>
        <taxon>Eukaryota</taxon>
        <taxon>Metazoa</taxon>
        <taxon>Chordata</taxon>
        <taxon>Craniata</taxon>
        <taxon>Vertebrata</taxon>
        <taxon>Euteleostomi</taxon>
        <taxon>Mammalia</taxon>
        <taxon>Eutheria</taxon>
        <taxon>Euarchontoglires</taxon>
        <taxon>Primates</taxon>
        <taxon>Haplorrhini</taxon>
        <taxon>Catarrhini</taxon>
        <taxon>Hominidae</taxon>
        <taxon>Homo</taxon>
    </lineage>
</organism>
<name>AVL9_HUMAN</name>